<comment type="function">
    <text evidence="1 3">Catalyzes the synthesis of dihydrouridine, a modified base found in the D-loop of most tRNAs. Specifically modifies U47 in cytoplasmic tRNAs (By similarity). Catalyzes the synthesis of dihydrouridine in some mRNAs, thereby affecting their translation (By similarity).</text>
</comment>
<comment type="catalytic activity">
    <reaction evidence="1">
        <text>5,6-dihydrouridine(47) in tRNA + NAD(+) = uridine(47) in tRNA + NADH + H(+)</text>
        <dbReference type="Rhea" id="RHEA:53364"/>
        <dbReference type="Rhea" id="RHEA-COMP:13539"/>
        <dbReference type="Rhea" id="RHEA-COMP:13540"/>
        <dbReference type="ChEBI" id="CHEBI:15378"/>
        <dbReference type="ChEBI" id="CHEBI:57540"/>
        <dbReference type="ChEBI" id="CHEBI:57945"/>
        <dbReference type="ChEBI" id="CHEBI:65315"/>
        <dbReference type="ChEBI" id="CHEBI:74443"/>
        <dbReference type="EC" id="1.3.1.89"/>
    </reaction>
    <physiologicalReaction direction="right-to-left" evidence="1">
        <dbReference type="Rhea" id="RHEA:53366"/>
    </physiologicalReaction>
</comment>
<comment type="catalytic activity">
    <reaction evidence="1">
        <text>5,6-dihydrouridine(47) in tRNA + NADP(+) = uridine(47) in tRNA + NADPH + H(+)</text>
        <dbReference type="Rhea" id="RHEA:53360"/>
        <dbReference type="Rhea" id="RHEA-COMP:13539"/>
        <dbReference type="Rhea" id="RHEA-COMP:13540"/>
        <dbReference type="ChEBI" id="CHEBI:15378"/>
        <dbReference type="ChEBI" id="CHEBI:57783"/>
        <dbReference type="ChEBI" id="CHEBI:58349"/>
        <dbReference type="ChEBI" id="CHEBI:65315"/>
        <dbReference type="ChEBI" id="CHEBI:74443"/>
        <dbReference type="EC" id="1.3.1.89"/>
    </reaction>
    <physiologicalReaction direction="right-to-left" evidence="1">
        <dbReference type="Rhea" id="RHEA:53362"/>
    </physiologicalReaction>
</comment>
<comment type="catalytic activity">
    <reaction evidence="3">
        <text>a 5,6-dihydrouridine in mRNA + NAD(+) = a uridine in mRNA + NADH + H(+)</text>
        <dbReference type="Rhea" id="RHEA:69851"/>
        <dbReference type="Rhea" id="RHEA-COMP:14658"/>
        <dbReference type="Rhea" id="RHEA-COMP:17789"/>
        <dbReference type="ChEBI" id="CHEBI:15378"/>
        <dbReference type="ChEBI" id="CHEBI:57540"/>
        <dbReference type="ChEBI" id="CHEBI:57945"/>
        <dbReference type="ChEBI" id="CHEBI:65315"/>
        <dbReference type="ChEBI" id="CHEBI:74443"/>
    </reaction>
    <physiologicalReaction direction="right-to-left" evidence="3">
        <dbReference type="Rhea" id="RHEA:69853"/>
    </physiologicalReaction>
</comment>
<comment type="catalytic activity">
    <reaction evidence="3">
        <text>a 5,6-dihydrouridine in mRNA + NADP(+) = a uridine in mRNA + NADPH + H(+)</text>
        <dbReference type="Rhea" id="RHEA:69855"/>
        <dbReference type="Rhea" id="RHEA-COMP:14658"/>
        <dbReference type="Rhea" id="RHEA-COMP:17789"/>
        <dbReference type="ChEBI" id="CHEBI:15378"/>
        <dbReference type="ChEBI" id="CHEBI:57783"/>
        <dbReference type="ChEBI" id="CHEBI:58349"/>
        <dbReference type="ChEBI" id="CHEBI:65315"/>
        <dbReference type="ChEBI" id="CHEBI:74443"/>
    </reaction>
    <physiologicalReaction direction="right-to-left" evidence="3">
        <dbReference type="Rhea" id="RHEA:69857"/>
    </physiologicalReaction>
</comment>
<comment type="cofactor">
    <cofactor evidence="2">
        <name>FMN</name>
        <dbReference type="ChEBI" id="CHEBI:58210"/>
    </cofactor>
</comment>
<comment type="subcellular location">
    <subcellularLocation>
        <location evidence="1">Cytoplasm</location>
    </subcellularLocation>
    <subcellularLocation>
        <location evidence="1">Nucleus</location>
    </subcellularLocation>
</comment>
<comment type="similarity">
    <text evidence="6">Belongs to the Dus family. Dus3 subfamily.</text>
</comment>
<feature type="chain" id="PRO_0000330252" description="tRNA-dihydrouridine(47) synthase [NAD(P)(+)]">
    <location>
        <begin position="1"/>
        <end position="668"/>
    </location>
</feature>
<feature type="zinc finger region" description="C3H1-type 1" evidence="4">
    <location>
        <begin position="92"/>
        <end position="122"/>
    </location>
</feature>
<feature type="zinc finger region" description="C3H1-type 2" evidence="4">
    <location>
        <begin position="134"/>
        <end position="164"/>
    </location>
</feature>
<feature type="region of interest" description="Disordered" evidence="5">
    <location>
        <begin position="1"/>
        <end position="31"/>
    </location>
</feature>
<feature type="region of interest" description="Disordered" evidence="5">
    <location>
        <begin position="59"/>
        <end position="92"/>
    </location>
</feature>
<feature type="region of interest" description="Disordered" evidence="5">
    <location>
        <begin position="227"/>
        <end position="264"/>
    </location>
</feature>
<feature type="compositionally biased region" description="Basic and acidic residues" evidence="5">
    <location>
        <begin position="1"/>
        <end position="22"/>
    </location>
</feature>
<feature type="compositionally biased region" description="Basic residues" evidence="5">
    <location>
        <begin position="70"/>
        <end position="83"/>
    </location>
</feature>
<feature type="active site" description="Proton donor" evidence="2">
    <location>
        <position position="386"/>
    </location>
</feature>
<feature type="binding site" evidence="2">
    <location>
        <begin position="299"/>
        <end position="301"/>
    </location>
    <ligand>
        <name>FMN</name>
        <dbReference type="ChEBI" id="CHEBI:58210"/>
    </ligand>
</feature>
<feature type="binding site" evidence="2">
    <location>
        <position position="354"/>
    </location>
    <ligand>
        <name>FMN</name>
        <dbReference type="ChEBI" id="CHEBI:58210"/>
    </ligand>
</feature>
<feature type="binding site" evidence="2">
    <location>
        <position position="426"/>
    </location>
    <ligand>
        <name>FMN</name>
        <dbReference type="ChEBI" id="CHEBI:58210"/>
    </ligand>
</feature>
<feature type="binding site" evidence="2">
    <location>
        <position position="457"/>
    </location>
    <ligand>
        <name>FMN</name>
        <dbReference type="ChEBI" id="CHEBI:58210"/>
    </ligand>
</feature>
<feature type="binding site" evidence="2">
    <location>
        <begin position="509"/>
        <end position="511"/>
    </location>
    <ligand>
        <name>FMN</name>
        <dbReference type="ChEBI" id="CHEBI:58210"/>
    </ligand>
</feature>
<feature type="binding site" evidence="2">
    <location>
        <begin position="534"/>
        <end position="535"/>
    </location>
    <ligand>
        <name>FMN</name>
        <dbReference type="ChEBI" id="CHEBI:58210"/>
    </ligand>
</feature>
<gene>
    <name type="primary">DUS3</name>
    <name type="ORF">SCY_3953</name>
</gene>
<sequence>MEQNAEKRSIVGDDNSTVKRQDTSPSKGIAHIKPEYIVPLKQNENQKVAIYDEEMSSDRMTNEFAGGTNKKNKNGRGKKRGQNKNRDNRQVKEQNVLCPRLIHGDISKCSFGDNCRFVHDINLYLSTKKPEVESNIFPSCPVFNSLGFCPMGFKCRFLSSHLNKEDNILISKKEIDPDAQTIWSVKGEVNHISPERKLDLIKRRFPFTKSNEILEIIDSFQQECRDSMKPEEEVESTPQLKKQDPDVEQPVAPQVEQRNKELSEHRMKQREVYLKYKDTRYFAQEKKPLDLYHKKIVSPLTTVGNLPYRRLMRKLGADVTYSEMALAVPLIQGTNSEWALPKAHTSEFPGFGVQVACSKAWQAAKAAEALANSVSEISEINLNSGCPIDLLYRQGSGSALLDNPARMIRCLNAMNYVSKDIPITVKIRTGTKEGHPIAEGLVKRLVNETDVAAITLHGRSRQQRYTKSADWDYVSQVADTLRSAEADFIETEQGKEGRDSKNRIQFVGNGDVNNFEDWYRYLNGNENIDSVMVARGALIKPWIFEEVESQQYLDKTSTERLDILRDYAQFSMEHWGTDEYGISQCRRFFCEFMSFFHRYVPMGICERYPVKLNERPPNWCGRDELETLMGSTDVNDWIKLSDLFFGKTDENFVFVPKHKSSSYANRDS</sequence>
<protein>
    <recommendedName>
        <fullName>tRNA-dihydrouridine(47) synthase [NAD(P)(+)]</fullName>
        <ecNumber evidence="1">1.3.1.89</ecNumber>
    </recommendedName>
    <alternativeName>
        <fullName>mRNA-dihydrouridine synthase DUS3</fullName>
        <ecNumber evidence="3">1.3.1.-</ecNumber>
    </alternativeName>
    <alternativeName>
        <fullName>tRNA-dihydrouridine synthase 3</fullName>
    </alternativeName>
</protein>
<dbReference type="EC" id="1.3.1.89" evidence="1"/>
<dbReference type="EC" id="1.3.1.-" evidence="3"/>
<dbReference type="EMBL" id="AAFW02000171">
    <property type="protein sequence ID" value="EDN59303.1"/>
    <property type="molecule type" value="Genomic_DNA"/>
</dbReference>
<dbReference type="SMR" id="A7A1S5"/>
<dbReference type="HOGENOM" id="CLU_013299_7_0_1"/>
<dbReference type="Proteomes" id="UP000007060">
    <property type="component" value="Unassembled WGS sequence"/>
</dbReference>
<dbReference type="GO" id="GO:0005737">
    <property type="term" value="C:cytoplasm"/>
    <property type="evidence" value="ECO:0007669"/>
    <property type="project" value="UniProtKB-SubCell"/>
</dbReference>
<dbReference type="GO" id="GO:0005634">
    <property type="term" value="C:nucleus"/>
    <property type="evidence" value="ECO:0007669"/>
    <property type="project" value="UniProtKB-SubCell"/>
</dbReference>
<dbReference type="GO" id="GO:0050660">
    <property type="term" value="F:flavin adenine dinucleotide binding"/>
    <property type="evidence" value="ECO:0007669"/>
    <property type="project" value="InterPro"/>
</dbReference>
<dbReference type="GO" id="GO:0106414">
    <property type="term" value="F:mRNA dihydrouridine synthase activity"/>
    <property type="evidence" value="ECO:0007669"/>
    <property type="project" value="RHEA"/>
</dbReference>
<dbReference type="GO" id="GO:0003723">
    <property type="term" value="F:RNA binding"/>
    <property type="evidence" value="ECO:0007669"/>
    <property type="project" value="TreeGrafter"/>
</dbReference>
<dbReference type="GO" id="GO:0102265">
    <property type="term" value="F:tRNA-dihydrouridine47 synthase activity"/>
    <property type="evidence" value="ECO:0007669"/>
    <property type="project" value="UniProtKB-EC"/>
</dbReference>
<dbReference type="GO" id="GO:0008270">
    <property type="term" value="F:zinc ion binding"/>
    <property type="evidence" value="ECO:0007669"/>
    <property type="project" value="UniProtKB-KW"/>
</dbReference>
<dbReference type="GO" id="GO:0006397">
    <property type="term" value="P:mRNA processing"/>
    <property type="evidence" value="ECO:0007669"/>
    <property type="project" value="UniProtKB-KW"/>
</dbReference>
<dbReference type="CDD" id="cd02801">
    <property type="entry name" value="DUS_like_FMN"/>
    <property type="match status" value="1"/>
</dbReference>
<dbReference type="FunFam" id="3.20.20.70:FF:000145">
    <property type="entry name" value="tRNA-dihydrouridine(47) synthase [NAD(P)(+)]"/>
    <property type="match status" value="1"/>
</dbReference>
<dbReference type="FunFam" id="4.10.1000.10:FF:000029">
    <property type="entry name" value="tRNA-dihydrouridine(47) synthase [NAD(P)(+)]"/>
    <property type="match status" value="1"/>
</dbReference>
<dbReference type="Gene3D" id="3.20.20.70">
    <property type="entry name" value="Aldolase class I"/>
    <property type="match status" value="1"/>
</dbReference>
<dbReference type="Gene3D" id="4.10.1000.10">
    <property type="entry name" value="Zinc finger, CCCH-type"/>
    <property type="match status" value="1"/>
</dbReference>
<dbReference type="InterPro" id="IPR013785">
    <property type="entry name" value="Aldolase_TIM"/>
</dbReference>
<dbReference type="InterPro" id="IPR035587">
    <property type="entry name" value="DUS-like_FMN-bd"/>
</dbReference>
<dbReference type="InterPro" id="IPR018517">
    <property type="entry name" value="tRNA_hU_synthase_CS"/>
</dbReference>
<dbReference type="InterPro" id="IPR000571">
    <property type="entry name" value="Znf_CCCH"/>
</dbReference>
<dbReference type="PANTHER" id="PTHR45846">
    <property type="entry name" value="TRNA-DIHYDROURIDINE(47) SYNTHASE [NAD(P)(+)]-LIKE"/>
    <property type="match status" value="1"/>
</dbReference>
<dbReference type="PANTHER" id="PTHR45846:SF1">
    <property type="entry name" value="TRNA-DIHYDROURIDINE(47) SYNTHASE [NAD(P)(+)]-LIKE"/>
    <property type="match status" value="1"/>
</dbReference>
<dbReference type="Pfam" id="PF01207">
    <property type="entry name" value="Dus"/>
    <property type="match status" value="1"/>
</dbReference>
<dbReference type="SUPFAM" id="SSF51395">
    <property type="entry name" value="FMN-linked oxidoreductases"/>
    <property type="match status" value="1"/>
</dbReference>
<dbReference type="PROSITE" id="PS01136">
    <property type="entry name" value="UPF0034"/>
    <property type="match status" value="1"/>
</dbReference>
<dbReference type="PROSITE" id="PS50103">
    <property type="entry name" value="ZF_C3H1"/>
    <property type="match status" value="2"/>
</dbReference>
<organism>
    <name type="scientific">Saccharomyces cerevisiae (strain YJM789)</name>
    <name type="common">Baker's yeast</name>
    <dbReference type="NCBI Taxonomy" id="307796"/>
    <lineage>
        <taxon>Eukaryota</taxon>
        <taxon>Fungi</taxon>
        <taxon>Dikarya</taxon>
        <taxon>Ascomycota</taxon>
        <taxon>Saccharomycotina</taxon>
        <taxon>Saccharomycetes</taxon>
        <taxon>Saccharomycetales</taxon>
        <taxon>Saccharomycetaceae</taxon>
        <taxon>Saccharomyces</taxon>
    </lineage>
</organism>
<keyword id="KW-0963">Cytoplasm</keyword>
<keyword id="KW-0285">Flavoprotein</keyword>
<keyword id="KW-0288">FMN</keyword>
<keyword id="KW-0479">Metal-binding</keyword>
<keyword id="KW-0507">mRNA processing</keyword>
<keyword id="KW-0520">NAD</keyword>
<keyword id="KW-0521">NADP</keyword>
<keyword id="KW-0539">Nucleus</keyword>
<keyword id="KW-0560">Oxidoreductase</keyword>
<keyword id="KW-0677">Repeat</keyword>
<keyword id="KW-0819">tRNA processing</keyword>
<keyword id="KW-0862">Zinc</keyword>
<keyword id="KW-0863">Zinc-finger</keyword>
<reference key="1">
    <citation type="journal article" date="2007" name="Proc. Natl. Acad. Sci. U.S.A.">
        <title>Genome sequencing and comparative analysis of Saccharomyces cerevisiae strain YJM789.</title>
        <authorList>
            <person name="Wei W."/>
            <person name="McCusker J.H."/>
            <person name="Hyman R.W."/>
            <person name="Jones T."/>
            <person name="Ning Y."/>
            <person name="Cao Z."/>
            <person name="Gu Z."/>
            <person name="Bruno D."/>
            <person name="Miranda M."/>
            <person name="Nguyen M."/>
            <person name="Wilhelmy J."/>
            <person name="Komp C."/>
            <person name="Tamse R."/>
            <person name="Wang X."/>
            <person name="Jia P."/>
            <person name="Luedi P."/>
            <person name="Oefner P.J."/>
            <person name="David L."/>
            <person name="Dietrich F.S."/>
            <person name="Li Y."/>
            <person name="Davis R.W."/>
            <person name="Steinmetz L.M."/>
        </authorList>
    </citation>
    <scope>NUCLEOTIDE SEQUENCE [LARGE SCALE GENOMIC DNA]</scope>
    <source>
        <strain>YJM789</strain>
    </source>
</reference>
<accession>A7A1S5</accession>
<evidence type="ECO:0000250" key="1">
    <source>
        <dbReference type="UniProtKB" id="Q06053"/>
    </source>
</evidence>
<evidence type="ECO:0000250" key="2">
    <source>
        <dbReference type="UniProtKB" id="Q5SMC7"/>
    </source>
</evidence>
<evidence type="ECO:0000250" key="3">
    <source>
        <dbReference type="UniProtKB" id="Q9UTH9"/>
    </source>
</evidence>
<evidence type="ECO:0000255" key="4">
    <source>
        <dbReference type="PROSITE-ProRule" id="PRU00723"/>
    </source>
</evidence>
<evidence type="ECO:0000256" key="5">
    <source>
        <dbReference type="SAM" id="MobiDB-lite"/>
    </source>
</evidence>
<evidence type="ECO:0000305" key="6"/>
<name>DUS3_YEAS7</name>
<proteinExistence type="inferred from homology"/>